<proteinExistence type="evidence at protein level"/>
<protein>
    <recommendedName>
        <fullName>Chorionic somatomammotropin hormone</fullName>
    </recommendedName>
    <alternativeName>
        <fullName>Placental lactogen</fullName>
        <shortName>PL</shortName>
    </alternativeName>
</protein>
<reference key="1">
    <citation type="journal article" date="1989" name="Mol. Endocrinol.">
        <title>Cloning and expression of ovine placental lactogen.</title>
        <authorList>
            <person name="Colosi P."/>
            <person name="Thordarson G."/>
            <person name="Hellmiss R."/>
            <person name="Singh K."/>
            <person name="Forsyth I.A."/>
            <person name="Gluckman P."/>
            <person name="Wood W.I."/>
        </authorList>
    </citation>
    <scope>NUCLEOTIDE SEQUENCE [MRNA]</scope>
</reference>
<reference key="2">
    <citation type="journal article" date="1996" name="Biochim. Biophys. Acta">
        <title>Identification of a tyrosine residue in ovine placental lactogen as essential for its binding to receptors.</title>
        <authorList>
            <person name="Cymes G.D."/>
            <person name="Wolfenstein-Todel C."/>
        </authorList>
    </citation>
    <scope>PROTEIN SEQUENCE OF 62-73; 80-87; 182-191; 204-208 AND 220-227</scope>
</reference>
<reference key="3">
    <citation type="journal article" date="2000" name="Nat. Struct. Biol.">
        <title>Ternary complex between placental lactogen and the extracellular domain of the prolactin receptor.</title>
        <authorList>
            <person name="Elkins P.A."/>
            <person name="Christinger H.W."/>
            <person name="Sandowski Y."/>
            <person name="Sakal E."/>
            <person name="Gertler A."/>
            <person name="de Vos A.M."/>
            <person name="Kossiakoff A.A."/>
        </authorList>
    </citation>
    <scope>X-RAY CRYSTALLOGRAPHY (2.3 ANGSTROMS) OF 44-234</scope>
</reference>
<keyword id="KW-0002">3D-structure</keyword>
<keyword id="KW-0903">Direct protein sequencing</keyword>
<keyword id="KW-1015">Disulfide bond</keyword>
<keyword id="KW-0372">Hormone</keyword>
<keyword id="KW-1185">Reference proteome</keyword>
<keyword id="KW-0964">Secreted</keyword>
<keyword id="KW-0732">Signal</keyword>
<dbReference type="EMBL" id="M31660">
    <property type="protein sequence ID" value="AAA31577.1"/>
    <property type="molecule type" value="mRNA"/>
</dbReference>
<dbReference type="PIR" id="A40143">
    <property type="entry name" value="A40143"/>
</dbReference>
<dbReference type="PIR" id="S70031">
    <property type="entry name" value="S70031"/>
</dbReference>
<dbReference type="RefSeq" id="NP_001009309.2">
    <property type="nucleotide sequence ID" value="NM_001009309.3"/>
</dbReference>
<dbReference type="PDB" id="1F6F">
    <property type="method" value="X-ray"/>
    <property type="resolution" value="2.30 A"/>
    <property type="chains" value="A=38-236"/>
</dbReference>
<dbReference type="PDBsum" id="1F6F"/>
<dbReference type="SMR" id="P16038"/>
<dbReference type="MINT" id="P16038"/>
<dbReference type="STRING" id="9940.ENSOARP00000009523"/>
<dbReference type="PaxDb" id="9940-ENSOARP00000009523"/>
<dbReference type="Ensembl" id="ENSOART00180031930">
    <property type="protein sequence ID" value="ENSOARP00180016385"/>
    <property type="gene ID" value="ENSOARG00180019384"/>
</dbReference>
<dbReference type="Ensembl" id="ENSOART00215033219">
    <property type="protein sequence ID" value="ENSOARP00215017408"/>
    <property type="gene ID" value="ENSOARG00215019831"/>
</dbReference>
<dbReference type="Ensembl" id="ENSOART00220082562">
    <property type="protein sequence ID" value="ENSOARP00220044589"/>
    <property type="gene ID" value="ENSOARG00220049553"/>
</dbReference>
<dbReference type="GeneID" id="443319"/>
<dbReference type="KEGG" id="oas:443319"/>
<dbReference type="eggNOG" id="ENOG502QYU3">
    <property type="taxonomic scope" value="Eukaryota"/>
</dbReference>
<dbReference type="OrthoDB" id="9704865at2759"/>
<dbReference type="EvolutionaryTrace" id="P16038"/>
<dbReference type="Proteomes" id="UP000002356">
    <property type="component" value="Unplaced"/>
</dbReference>
<dbReference type="GO" id="GO:0005615">
    <property type="term" value="C:extracellular space"/>
    <property type="evidence" value="ECO:0007669"/>
    <property type="project" value="TreeGrafter"/>
</dbReference>
<dbReference type="GO" id="GO:0005179">
    <property type="term" value="F:hormone activity"/>
    <property type="evidence" value="ECO:0007669"/>
    <property type="project" value="UniProtKB-KW"/>
</dbReference>
<dbReference type="GO" id="GO:0005148">
    <property type="term" value="F:prolactin receptor binding"/>
    <property type="evidence" value="ECO:0000314"/>
    <property type="project" value="AgBase"/>
</dbReference>
<dbReference type="GO" id="GO:0007565">
    <property type="term" value="P:female pregnancy"/>
    <property type="evidence" value="ECO:0007669"/>
    <property type="project" value="TreeGrafter"/>
</dbReference>
<dbReference type="GO" id="GO:0030879">
    <property type="term" value="P:mammary gland development"/>
    <property type="evidence" value="ECO:0007669"/>
    <property type="project" value="TreeGrafter"/>
</dbReference>
<dbReference type="GO" id="GO:0008284">
    <property type="term" value="P:positive regulation of cell population proliferation"/>
    <property type="evidence" value="ECO:0007669"/>
    <property type="project" value="TreeGrafter"/>
</dbReference>
<dbReference type="GO" id="GO:1903489">
    <property type="term" value="P:positive regulation of lactation"/>
    <property type="evidence" value="ECO:0007669"/>
    <property type="project" value="TreeGrafter"/>
</dbReference>
<dbReference type="GO" id="GO:0046427">
    <property type="term" value="P:positive regulation of receptor signaling pathway via JAK-STAT"/>
    <property type="evidence" value="ECO:0007669"/>
    <property type="project" value="TreeGrafter"/>
</dbReference>
<dbReference type="GO" id="GO:0031667">
    <property type="term" value="P:response to nutrient levels"/>
    <property type="evidence" value="ECO:0007669"/>
    <property type="project" value="TreeGrafter"/>
</dbReference>
<dbReference type="CDD" id="cd10288">
    <property type="entry name" value="prolactin_like"/>
    <property type="match status" value="1"/>
</dbReference>
<dbReference type="FunFam" id="1.20.1250.10:FF:000050">
    <property type="entry name" value="Chorionic somatomammotropin hormone 1"/>
    <property type="match status" value="1"/>
</dbReference>
<dbReference type="Gene3D" id="1.20.1250.10">
    <property type="match status" value="1"/>
</dbReference>
<dbReference type="InterPro" id="IPR009079">
    <property type="entry name" value="4_helix_cytokine-like_core"/>
</dbReference>
<dbReference type="InterPro" id="IPR001400">
    <property type="entry name" value="Somatotropin/Prolactin"/>
</dbReference>
<dbReference type="InterPro" id="IPR018116">
    <property type="entry name" value="Somatotropin_CS"/>
</dbReference>
<dbReference type="PANTHER" id="PTHR11417:SF5">
    <property type="entry name" value="PROLACTIN"/>
    <property type="match status" value="1"/>
</dbReference>
<dbReference type="PANTHER" id="PTHR11417">
    <property type="entry name" value="SOMATOTROPIN,PROLACTIN"/>
    <property type="match status" value="1"/>
</dbReference>
<dbReference type="Pfam" id="PF00103">
    <property type="entry name" value="Hormone_1"/>
    <property type="match status" value="1"/>
</dbReference>
<dbReference type="PRINTS" id="PR00836">
    <property type="entry name" value="SOMATOTROPIN"/>
</dbReference>
<dbReference type="SUPFAM" id="SSF47266">
    <property type="entry name" value="4-helical cytokines"/>
    <property type="match status" value="1"/>
</dbReference>
<dbReference type="PROSITE" id="PS00266">
    <property type="entry name" value="SOMATOTROPIN_1"/>
    <property type="match status" value="1"/>
</dbReference>
<dbReference type="PROSITE" id="PS00338">
    <property type="entry name" value="SOMATOTROPIN_2"/>
    <property type="match status" value="1"/>
</dbReference>
<gene>
    <name type="primary">CSH</name>
</gene>
<accession>P16038</accession>
<accession>Q7M2L2</accession>
<sequence>MAPASSHREHQWTCNLVRGSRLLLLLVVSNLILCQGQAQHPPYCRNQPGKCQIPLQSLFDRATTVANYNSKLAGEMVNRFDEQYGQGINSESKVINCHTSSITTPNSKAEAINTEDKILFKLVISLLHSWDEPLHHAVTELANSKGTSPALLTKAQEIKEKAKVLVDGVEVIQKRIHPGEKNEPYPVWSEQSSLTSQDENVRRVAFYRLFHCLHRDSSKIYTYLRILKCRLTSCET</sequence>
<organism>
    <name type="scientific">Ovis aries</name>
    <name type="common">Sheep</name>
    <dbReference type="NCBI Taxonomy" id="9940"/>
    <lineage>
        <taxon>Eukaryota</taxon>
        <taxon>Metazoa</taxon>
        <taxon>Chordata</taxon>
        <taxon>Craniata</taxon>
        <taxon>Vertebrata</taxon>
        <taxon>Euteleostomi</taxon>
        <taxon>Mammalia</taxon>
        <taxon>Eutheria</taxon>
        <taxon>Laurasiatheria</taxon>
        <taxon>Artiodactyla</taxon>
        <taxon>Ruminantia</taxon>
        <taxon>Pecora</taxon>
        <taxon>Bovidae</taxon>
        <taxon>Caprinae</taxon>
        <taxon>Ovis</taxon>
    </lineage>
</organism>
<evidence type="ECO:0000255" key="1"/>
<evidence type="ECO:0000305" key="2"/>
<evidence type="ECO:0007829" key="3">
    <source>
        <dbReference type="PDB" id="1F6F"/>
    </source>
</evidence>
<comment type="subcellular location">
    <subcellularLocation>
        <location>Secreted</location>
    </subcellularLocation>
</comment>
<comment type="similarity">
    <text evidence="2">Belongs to the somatotropin/prolactin family.</text>
</comment>
<name>CSH_SHEEP</name>
<feature type="signal peptide" evidence="1">
    <location>
        <begin position="1"/>
        <end position="36"/>
    </location>
</feature>
<feature type="chain" id="PRO_0000032966" description="Chorionic somatomammotropin hormone">
    <location>
        <begin position="37"/>
        <end position="236"/>
    </location>
</feature>
<feature type="disulfide bond">
    <location>
        <begin position="44"/>
        <end position="51"/>
    </location>
</feature>
<feature type="disulfide bond">
    <location>
        <begin position="97"/>
        <end position="212"/>
    </location>
</feature>
<feature type="disulfide bond">
    <location>
        <begin position="229"/>
        <end position="234"/>
    </location>
</feature>
<feature type="helix" evidence="3">
    <location>
        <begin position="42"/>
        <end position="44"/>
    </location>
</feature>
<feature type="strand" evidence="3">
    <location>
        <begin position="46"/>
        <end position="50"/>
    </location>
</feature>
<feature type="helix" evidence="3">
    <location>
        <begin position="55"/>
        <end position="81"/>
    </location>
</feature>
<feature type="helix" evidence="3">
    <location>
        <begin position="98"/>
        <end position="101"/>
    </location>
</feature>
<feature type="helix" evidence="3">
    <location>
        <begin position="108"/>
        <end position="113"/>
    </location>
</feature>
<feature type="helix" evidence="3">
    <location>
        <begin position="116"/>
        <end position="128"/>
    </location>
</feature>
<feature type="helix" evidence="3">
    <location>
        <begin position="131"/>
        <end position="142"/>
    </location>
</feature>
<feature type="helix" evidence="3">
    <location>
        <begin position="150"/>
        <end position="176"/>
    </location>
</feature>
<feature type="helix" evidence="3">
    <location>
        <begin position="189"/>
        <end position="195"/>
    </location>
</feature>
<feature type="helix" evidence="3">
    <location>
        <begin position="199"/>
        <end position="231"/>
    </location>
</feature>